<sequence length="88" mass="10694">MEKGLLSNFWNDFKRWSEDRKVEIVIWWSNLESKVRLGFWIILIILLGILAIRIAIKVYQCVKFTNQGVKKIKRIIKRKRSIKKYRKT</sequence>
<evidence type="ECO:0000255" key="1"/>
<evidence type="ECO:0000305" key="2"/>
<proteinExistence type="predicted"/>
<name>VPA1_BEFVB</name>
<accession>Q65475</accession>
<dbReference type="EMBL" id="U18106">
    <property type="protein sequence ID" value="AAB63048.1"/>
    <property type="molecule type" value="Genomic_RNA"/>
</dbReference>
<dbReference type="EMBL" id="AF234533">
    <property type="protein sequence ID" value="AAG10415.1"/>
    <property type="molecule type" value="Genomic_RNA"/>
</dbReference>
<dbReference type="RefSeq" id="NP_065404.1">
    <property type="nucleotide sequence ID" value="NC_002526.1"/>
</dbReference>
<dbReference type="SMR" id="Q65475"/>
<dbReference type="TCDB" id="1.A.95.1.1">
    <property type="family name" value="the ephemerovirus viroporin (evvp) family"/>
</dbReference>
<dbReference type="GeneID" id="911731"/>
<dbReference type="Proteomes" id="UP000008588">
    <property type="component" value="Segment"/>
</dbReference>
<dbReference type="GO" id="GO:0016020">
    <property type="term" value="C:membrane"/>
    <property type="evidence" value="ECO:0007669"/>
    <property type="project" value="UniProtKB-SubCell"/>
</dbReference>
<comment type="subcellular location">
    <subcellularLocation>
        <location evidence="2">Membrane</location>
        <topology evidence="2">Single-pass membrane protein</topology>
    </subcellularLocation>
</comment>
<feature type="chain" id="PRO_0000299217" description="Protein alpha-1">
    <location>
        <begin position="1"/>
        <end position="88"/>
    </location>
</feature>
<feature type="transmembrane region" description="Helical" evidence="1">
    <location>
        <begin position="38"/>
        <end position="58"/>
    </location>
</feature>
<organismHost>
    <name type="scientific">Bos taurus</name>
    <name type="common">Bovine</name>
    <dbReference type="NCBI Taxonomy" id="9913"/>
</organismHost>
<organismHost>
    <name type="scientific">Bubalus bubalis</name>
    <name type="common">Domestic water buffalo</name>
    <dbReference type="NCBI Taxonomy" id="89462"/>
</organismHost>
<organismHost>
    <name type="scientific">Culicoides</name>
    <dbReference type="NCBI Taxonomy" id="58271"/>
</organismHost>
<organismHost>
    <name type="scientific">Syncerus caffer</name>
    <name type="common">African buffalo</name>
    <dbReference type="NCBI Taxonomy" id="9970"/>
</organismHost>
<gene>
    <name type="primary">alpha</name>
</gene>
<reference key="1">
    <citation type="journal article" date="1997" name="J. Gen. Virol.">
        <title>Genome organization and transcription strategy in the complex GNS-L intergenic region of bovine ephemeral fever rhabdovirus.</title>
        <authorList>
            <person name="McWilliam S.M."/>
            <person name="Kongsuwan K."/>
            <person name="Cowley J.A."/>
            <person name="Byrne K.A."/>
            <person name="Walker P.J."/>
        </authorList>
    </citation>
    <scope>NUCLEOTIDE SEQUENCE [GENOMIC RNA]</scope>
</reference>
<keyword id="KW-0472">Membrane</keyword>
<keyword id="KW-1185">Reference proteome</keyword>
<keyword id="KW-0812">Transmembrane</keyword>
<keyword id="KW-1133">Transmembrane helix</keyword>
<organism>
    <name type="scientific">Bovine ephemeral fever virus (strain BB7721)</name>
    <name type="common">BEFV</name>
    <dbReference type="NCBI Taxonomy" id="928297"/>
    <lineage>
        <taxon>Viruses</taxon>
        <taxon>Riboviria</taxon>
        <taxon>Orthornavirae</taxon>
        <taxon>Negarnaviricota</taxon>
        <taxon>Haploviricotina</taxon>
        <taxon>Monjiviricetes</taxon>
        <taxon>Mononegavirales</taxon>
        <taxon>Rhabdoviridae</taxon>
        <taxon>Alpharhabdovirinae</taxon>
        <taxon>Ephemerovirus</taxon>
        <taxon>Ephemerovirus febris</taxon>
    </lineage>
</organism>
<protein>
    <recommendedName>
        <fullName>Protein alpha-1</fullName>
    </recommendedName>
</protein>